<comment type="function">
    <text evidence="1">This phospholipase A2 inhibitor binds directly phospholipase A2 in the presence or absence of calcium.</text>
</comment>
<comment type="subunit">
    <text evidence="2">Homotrimer; non-covalently linked.</text>
</comment>
<comment type="subcellular location">
    <subcellularLocation>
        <location evidence="7">Secreted</location>
    </subcellularLocation>
    <text evidence="6">Secreted in plasma.</text>
</comment>
<comment type="tissue specificity">
    <text evidence="7">Expressed by the liver.</text>
</comment>
<comment type="similarity">
    <text evidence="6">Belongs to the alpha-type phospholipase A2 inhibitor family.</text>
</comment>
<keyword id="KW-0106">Calcium</keyword>
<keyword id="KW-1015">Disulfide bond</keyword>
<keyword id="KW-0325">Glycoprotein</keyword>
<keyword id="KW-0430">Lectin</keyword>
<keyword id="KW-0593">Phospholipase A2 inhibitor</keyword>
<keyword id="KW-0964">Secreted</keyword>
<keyword id="KW-0732">Signal</keyword>
<evidence type="ECO:0000250" key="1"/>
<evidence type="ECO:0000250" key="2">
    <source>
        <dbReference type="UniProtKB" id="A1XRN2"/>
    </source>
</evidence>
<evidence type="ECO:0000250" key="3">
    <source>
        <dbReference type="UniProtKB" id="P21755"/>
    </source>
</evidence>
<evidence type="ECO:0000255" key="4"/>
<evidence type="ECO:0000255" key="5">
    <source>
        <dbReference type="PROSITE-ProRule" id="PRU00040"/>
    </source>
</evidence>
<evidence type="ECO:0000305" key="6"/>
<evidence type="ECO:0000305" key="7">
    <source ref="1"/>
</evidence>
<accession>B1A4P7</accession>
<protein>
    <recommendedName>
        <fullName>Phospholipase A2 inhibitor clone 04</fullName>
        <shortName>alpha-PLI</shortName>
    </recommendedName>
</protein>
<sequence>MRLILLSSLLLLGIFLANGHEEDPDGKVLNSLIDSLMHLQREFANLKDAFLTVHRARSFGSGSERLYVTNKEIKNFEALRQICEQAEGHIPSPQLENQNKAFANVLERHGKEAYLVVGDSANFTNWAAGEPNKAAGTCVKADTHGSWHSASCDDNRLVVCEFYFIL</sequence>
<feature type="signal peptide" evidence="1">
    <location>
        <begin position="1"/>
        <end position="19"/>
    </location>
</feature>
<feature type="chain" id="PRO_0000356342" description="Phospholipase A2 inhibitor clone 04">
    <location>
        <begin position="20"/>
        <end position="166"/>
    </location>
</feature>
<feature type="domain" description="C-type lectin" evidence="5">
    <location>
        <begin position="46"/>
        <end position="161"/>
    </location>
</feature>
<feature type="glycosylation site" description="N-linked (GlcNAc...) asparagine" evidence="4">
    <location>
        <position position="122"/>
    </location>
</feature>
<feature type="disulfide bond" evidence="3">
    <location>
        <begin position="83"/>
        <end position="160"/>
    </location>
</feature>
<feature type="disulfide bond" evidence="3">
    <location>
        <begin position="138"/>
        <end position="152"/>
    </location>
</feature>
<proteinExistence type="evidence at transcript level"/>
<reference key="1">
    <citation type="submission" date="2008-01" db="EMBL/GenBank/DDBJ databases">
        <title>A profile of the phospholipase A2 inhibitors of the alpha class prospected in Brazilian Crotalidae snakes: structural and phylogenetic analysis.</title>
        <authorList>
            <person name="Estevao-Costa M.I."/>
            <person name="Costa M.A.F."/>
            <person name="Mudado M.A."/>
            <person name="Franco G.R."/>
            <person name="Fortes-Dias C.L."/>
        </authorList>
    </citation>
    <scope>NUCLEOTIDE SEQUENCE [MRNA]</scope>
    <source>
        <tissue>Liver</tissue>
    </source>
</reference>
<organism>
    <name type="scientific">Bothrops moojeni</name>
    <name type="common">Lance-headed viper</name>
    <name type="synonym">Caissaca</name>
    <dbReference type="NCBI Taxonomy" id="98334"/>
    <lineage>
        <taxon>Eukaryota</taxon>
        <taxon>Metazoa</taxon>
        <taxon>Chordata</taxon>
        <taxon>Craniata</taxon>
        <taxon>Vertebrata</taxon>
        <taxon>Euteleostomi</taxon>
        <taxon>Lepidosauria</taxon>
        <taxon>Squamata</taxon>
        <taxon>Bifurcata</taxon>
        <taxon>Unidentata</taxon>
        <taxon>Episquamata</taxon>
        <taxon>Toxicofera</taxon>
        <taxon>Serpentes</taxon>
        <taxon>Colubroidea</taxon>
        <taxon>Viperidae</taxon>
        <taxon>Crotalinae</taxon>
        <taxon>Bothrops</taxon>
    </lineage>
</organism>
<dbReference type="EMBL" id="EU421921">
    <property type="protein sequence ID" value="ABZ82338.1"/>
    <property type="molecule type" value="mRNA"/>
</dbReference>
<dbReference type="SMR" id="B1A4P7"/>
<dbReference type="GO" id="GO:0005576">
    <property type="term" value="C:extracellular region"/>
    <property type="evidence" value="ECO:0007669"/>
    <property type="project" value="UniProtKB-SubCell"/>
</dbReference>
<dbReference type="GO" id="GO:0030246">
    <property type="term" value="F:carbohydrate binding"/>
    <property type="evidence" value="ECO:0007669"/>
    <property type="project" value="UniProtKB-KW"/>
</dbReference>
<dbReference type="GO" id="GO:0019834">
    <property type="term" value="F:phospholipase A2 inhibitor activity"/>
    <property type="evidence" value="ECO:0007669"/>
    <property type="project" value="UniProtKB-KW"/>
</dbReference>
<dbReference type="Gene3D" id="3.10.100.10">
    <property type="entry name" value="Mannose-Binding Protein A, subunit A"/>
    <property type="match status" value="1"/>
</dbReference>
<dbReference type="InterPro" id="IPR001304">
    <property type="entry name" value="C-type_lectin-like"/>
</dbReference>
<dbReference type="InterPro" id="IPR016186">
    <property type="entry name" value="C-type_lectin-like/link_sf"/>
</dbReference>
<dbReference type="InterPro" id="IPR018378">
    <property type="entry name" value="C-type_lectin_CS"/>
</dbReference>
<dbReference type="InterPro" id="IPR016187">
    <property type="entry name" value="CTDL_fold"/>
</dbReference>
<dbReference type="Pfam" id="PF00059">
    <property type="entry name" value="Lectin_C"/>
    <property type="match status" value="1"/>
</dbReference>
<dbReference type="SUPFAM" id="SSF56436">
    <property type="entry name" value="C-type lectin-like"/>
    <property type="match status" value="1"/>
</dbReference>
<dbReference type="PROSITE" id="PS00615">
    <property type="entry name" value="C_TYPE_LECTIN_1"/>
    <property type="match status" value="1"/>
</dbReference>
<dbReference type="PROSITE" id="PS50041">
    <property type="entry name" value="C_TYPE_LECTIN_2"/>
    <property type="match status" value="1"/>
</dbReference>
<name>PLIA4_BOTMO</name>